<dbReference type="EC" id="5.1.1.3" evidence="2 4 5"/>
<dbReference type="EMBL" id="V00348">
    <property type="protein sequence ID" value="CAA23638.1"/>
    <property type="status" value="ALT_INIT"/>
    <property type="molecule type" value="Genomic_DNA"/>
</dbReference>
<dbReference type="EMBL" id="V00347">
    <property type="protein sequence ID" value="CAA23637.1"/>
    <property type="status" value="ALT_INIT"/>
    <property type="molecule type" value="Genomic_DNA"/>
</dbReference>
<dbReference type="EMBL" id="L14556">
    <property type="protein sequence ID" value="AAA23677.1"/>
    <property type="status" value="ALT_INIT"/>
    <property type="molecule type" value="Genomic_DNA"/>
</dbReference>
<dbReference type="EMBL" id="U00006">
    <property type="protein sequence ID" value="AAC43073.1"/>
    <property type="status" value="ALT_INIT"/>
    <property type="molecule type" value="Genomic_DNA"/>
</dbReference>
<dbReference type="EMBL" id="U00096">
    <property type="protein sequence ID" value="AAC76949.2"/>
    <property type="molecule type" value="Genomic_DNA"/>
</dbReference>
<dbReference type="EMBL" id="AP009048">
    <property type="protein sequence ID" value="BAE77344.1"/>
    <property type="molecule type" value="Genomic_DNA"/>
</dbReference>
<dbReference type="PIR" id="I41187">
    <property type="entry name" value="I41187"/>
</dbReference>
<dbReference type="RefSeq" id="NP_418402.2">
    <property type="nucleotide sequence ID" value="NC_000913.3"/>
</dbReference>
<dbReference type="RefSeq" id="WP_000201820.1">
    <property type="nucleotide sequence ID" value="NZ_SSZK01000065.1"/>
</dbReference>
<dbReference type="PDB" id="2JFN">
    <property type="method" value="X-ray"/>
    <property type="resolution" value="1.90 A"/>
    <property type="chains" value="A=1-285"/>
</dbReference>
<dbReference type="PDBsum" id="2JFN"/>
<dbReference type="SMR" id="P22634"/>
<dbReference type="BioGRID" id="4259606">
    <property type="interactions" value="254"/>
</dbReference>
<dbReference type="BioGRID" id="852763">
    <property type="interactions" value="9"/>
</dbReference>
<dbReference type="DIP" id="DIP-10283N"/>
<dbReference type="FunCoup" id="P22634">
    <property type="interactions" value="328"/>
</dbReference>
<dbReference type="IntAct" id="P22634">
    <property type="interactions" value="14"/>
</dbReference>
<dbReference type="STRING" id="511145.b3967"/>
<dbReference type="jPOST" id="P22634"/>
<dbReference type="PaxDb" id="511145-b3967"/>
<dbReference type="EnsemblBacteria" id="AAC76949">
    <property type="protein sequence ID" value="AAC76949"/>
    <property type="gene ID" value="b3967"/>
</dbReference>
<dbReference type="GeneID" id="948467"/>
<dbReference type="KEGG" id="ecj:JW5550"/>
<dbReference type="KEGG" id="eco:b3967"/>
<dbReference type="PATRIC" id="fig|1411691.4.peg.2737"/>
<dbReference type="EchoBASE" id="EB1189"/>
<dbReference type="eggNOG" id="COG0796">
    <property type="taxonomic scope" value="Bacteria"/>
</dbReference>
<dbReference type="HOGENOM" id="CLU_052344_2_0_6"/>
<dbReference type="InParanoid" id="P22634"/>
<dbReference type="OMA" id="LDFFKPH"/>
<dbReference type="OrthoDB" id="9801055at2"/>
<dbReference type="PhylomeDB" id="P22634"/>
<dbReference type="BioCyc" id="EcoCyc:GLUTRACE-MONOMER"/>
<dbReference type="BioCyc" id="MetaCyc:GLUTRACE-MONOMER"/>
<dbReference type="SABIO-RK" id="P22634"/>
<dbReference type="UniPathway" id="UPA00219"/>
<dbReference type="EvolutionaryTrace" id="P22634"/>
<dbReference type="PRO" id="PR:P22634"/>
<dbReference type="Proteomes" id="UP000000625">
    <property type="component" value="Chromosome"/>
</dbReference>
<dbReference type="GO" id="GO:0008881">
    <property type="term" value="F:glutamate racemase activity"/>
    <property type="evidence" value="ECO:0000314"/>
    <property type="project" value="EcoCyc"/>
</dbReference>
<dbReference type="GO" id="GO:0071555">
    <property type="term" value="P:cell wall organization"/>
    <property type="evidence" value="ECO:0007669"/>
    <property type="project" value="UniProtKB-KW"/>
</dbReference>
<dbReference type="GO" id="GO:0009252">
    <property type="term" value="P:peptidoglycan biosynthetic process"/>
    <property type="evidence" value="ECO:0000315"/>
    <property type="project" value="EcoCyc"/>
</dbReference>
<dbReference type="GO" id="GO:0008360">
    <property type="term" value="P:regulation of cell shape"/>
    <property type="evidence" value="ECO:0007669"/>
    <property type="project" value="UniProtKB-KW"/>
</dbReference>
<dbReference type="FunFam" id="3.40.50.1860:FF:000002">
    <property type="entry name" value="Glutamate racemase"/>
    <property type="match status" value="1"/>
</dbReference>
<dbReference type="Gene3D" id="3.40.50.1860">
    <property type="match status" value="2"/>
</dbReference>
<dbReference type="HAMAP" id="MF_00258">
    <property type="entry name" value="Glu_racemase"/>
    <property type="match status" value="1"/>
</dbReference>
<dbReference type="InterPro" id="IPR015942">
    <property type="entry name" value="Asp/Glu/hydantoin_racemase"/>
</dbReference>
<dbReference type="InterPro" id="IPR001920">
    <property type="entry name" value="Asp/Glu_race"/>
</dbReference>
<dbReference type="InterPro" id="IPR018187">
    <property type="entry name" value="Asp/Glu_racemase_AS_1"/>
</dbReference>
<dbReference type="InterPro" id="IPR033134">
    <property type="entry name" value="Asp/Glu_racemase_AS_2"/>
</dbReference>
<dbReference type="InterPro" id="IPR004391">
    <property type="entry name" value="Glu_race"/>
</dbReference>
<dbReference type="NCBIfam" id="TIGR00067">
    <property type="entry name" value="glut_race"/>
    <property type="match status" value="1"/>
</dbReference>
<dbReference type="NCBIfam" id="NF002034">
    <property type="entry name" value="PRK00865.1-1"/>
    <property type="match status" value="1"/>
</dbReference>
<dbReference type="PANTHER" id="PTHR21198">
    <property type="entry name" value="GLUTAMATE RACEMASE"/>
    <property type="match status" value="1"/>
</dbReference>
<dbReference type="PANTHER" id="PTHR21198:SF2">
    <property type="entry name" value="GLUTAMATE RACEMASE"/>
    <property type="match status" value="1"/>
</dbReference>
<dbReference type="Pfam" id="PF01177">
    <property type="entry name" value="Asp_Glu_race"/>
    <property type="match status" value="1"/>
</dbReference>
<dbReference type="SUPFAM" id="SSF53681">
    <property type="entry name" value="Aspartate/glutamate racemase"/>
    <property type="match status" value="2"/>
</dbReference>
<dbReference type="PROSITE" id="PS00923">
    <property type="entry name" value="ASP_GLU_RACEMASE_1"/>
    <property type="match status" value="1"/>
</dbReference>
<dbReference type="PROSITE" id="PS00924">
    <property type="entry name" value="ASP_GLU_RACEMASE_2"/>
    <property type="match status" value="1"/>
</dbReference>
<protein>
    <recommendedName>
        <fullName evidence="2 7">Glutamate racemase</fullName>
        <ecNumber evidence="2 4 5">5.1.1.3</ecNumber>
    </recommendedName>
</protein>
<proteinExistence type="evidence at protein level"/>
<accession>P22634</accession>
<accession>P78133</accession>
<accession>Q2M8R2</accession>
<feature type="chain" id="PRO_0000095470" description="Glutamate racemase">
    <location>
        <begin position="1"/>
        <end position="285"/>
    </location>
</feature>
<feature type="active site" description="Proton donor/acceptor" evidence="1 2">
    <location>
        <position position="92"/>
    </location>
</feature>
<feature type="active site" description="Proton donor/acceptor" evidence="1 2">
    <location>
        <position position="204"/>
    </location>
</feature>
<feature type="binding site" evidence="2 4 10">
    <location>
        <begin position="28"/>
        <end position="29"/>
    </location>
    <ligand>
        <name>substrate</name>
    </ligand>
</feature>
<feature type="binding site" evidence="2 4 10">
    <location>
        <begin position="60"/>
        <end position="61"/>
    </location>
    <ligand>
        <name>substrate</name>
    </ligand>
</feature>
<feature type="binding site" evidence="2 4 10">
    <location>
        <begin position="93"/>
        <end position="94"/>
    </location>
    <ligand>
        <name>substrate</name>
    </ligand>
</feature>
<feature type="binding site" evidence="4 10">
    <location>
        <position position="104"/>
    </location>
    <ligand>
        <name>UDP-N-acetyl-alpha-D-muramoyl-L-alanine</name>
        <dbReference type="ChEBI" id="CHEBI:83898"/>
    </ligand>
</feature>
<feature type="binding site" evidence="4 10">
    <location>
        <begin position="113"/>
        <end position="119"/>
    </location>
    <ligand>
        <name>UDP-N-acetyl-alpha-D-muramoyl-L-alanine</name>
        <dbReference type="ChEBI" id="CHEBI:83898"/>
    </ligand>
</feature>
<feature type="binding site" evidence="2 4 10">
    <location>
        <begin position="205"/>
        <end position="206"/>
    </location>
    <ligand>
        <name>substrate</name>
    </ligand>
</feature>
<feature type="strand" evidence="11">
    <location>
        <begin position="21"/>
        <end position="31"/>
    </location>
</feature>
<feature type="helix" evidence="11">
    <location>
        <begin position="33"/>
        <end position="43"/>
    </location>
</feature>
<feature type="strand" evidence="11">
    <location>
        <begin position="47"/>
        <end position="53"/>
    </location>
</feature>
<feature type="turn" evidence="11">
    <location>
        <begin position="55"/>
        <end position="57"/>
    </location>
</feature>
<feature type="turn" evidence="11">
    <location>
        <begin position="60"/>
        <end position="62"/>
    </location>
</feature>
<feature type="helix" evidence="11">
    <location>
        <begin position="65"/>
        <end position="82"/>
    </location>
</feature>
<feature type="strand" evidence="11">
    <location>
        <begin position="86"/>
        <end position="90"/>
    </location>
</feature>
<feature type="helix" evidence="11">
    <location>
        <begin position="93"/>
        <end position="106"/>
    </location>
</feature>
<feature type="helix" evidence="11">
    <location>
        <begin position="118"/>
        <end position="124"/>
    </location>
</feature>
<feature type="strand" evidence="11">
    <location>
        <begin position="126"/>
        <end position="134"/>
    </location>
</feature>
<feature type="helix" evidence="11">
    <location>
        <begin position="138"/>
        <end position="140"/>
    </location>
</feature>
<feature type="helix" evidence="11">
    <location>
        <begin position="142"/>
        <end position="150"/>
    </location>
</feature>
<feature type="strand" evidence="11">
    <location>
        <begin position="155"/>
        <end position="161"/>
    </location>
</feature>
<feature type="helix" evidence="11">
    <location>
        <begin position="163"/>
        <end position="173"/>
    </location>
</feature>
<feature type="helix" evidence="11">
    <location>
        <begin position="180"/>
        <end position="186"/>
    </location>
</feature>
<feature type="helix" evidence="11">
    <location>
        <begin position="188"/>
        <end position="191"/>
    </location>
</feature>
<feature type="strand" evidence="11">
    <location>
        <begin position="198"/>
        <end position="202"/>
    </location>
</feature>
<feature type="helix" evidence="11">
    <location>
        <begin position="207"/>
        <end position="210"/>
    </location>
</feature>
<feature type="helix" evidence="11">
    <location>
        <begin position="211"/>
        <end position="217"/>
    </location>
</feature>
<feature type="strand" evidence="11">
    <location>
        <begin position="223"/>
        <end position="225"/>
    </location>
</feature>
<feature type="helix" evidence="11">
    <location>
        <begin position="228"/>
        <end position="241"/>
    </location>
</feature>
<feature type="strand" evidence="11">
    <location>
        <begin position="253"/>
        <end position="258"/>
    </location>
</feature>
<feature type="helix" evidence="11">
    <location>
        <begin position="261"/>
        <end position="264"/>
    </location>
</feature>
<feature type="helix" evidence="11">
    <location>
        <begin position="267"/>
        <end position="272"/>
    </location>
</feature>
<feature type="strand" evidence="11">
    <location>
        <begin position="277"/>
        <end position="280"/>
    </location>
</feature>
<reference key="1">
    <citation type="journal article" date="1981" name="J. Mol. Biol.">
        <title>Gene organization and primary structure of a ribosomal RNA operon from Escherichia coli.</title>
        <authorList>
            <person name="Brosius J."/>
            <person name="Dull T.J."/>
            <person name="Sleeter D.D."/>
            <person name="Noller H.F."/>
        </authorList>
    </citation>
    <scope>NUCLEOTIDE SEQUENCE [GENOMIC DNA]</scope>
</reference>
<reference key="2">
    <citation type="journal article" date="1983" name="Biochim. Biophys. Acta">
        <title>Identification of two new promoters probably involved in the transcription of a ribosomal RNA gene of Escherichia coli.</title>
        <authorList>
            <person name="Boros I."/>
            <person name="Csordas-Toth E."/>
            <person name="Kiss A."/>
            <person name="Kiss I."/>
            <person name="Toeroek I."/>
            <person name="Udvardy A."/>
            <person name="Udvardy K."/>
            <person name="Venetianer P."/>
        </authorList>
    </citation>
    <scope>NUCLEOTIDE SEQUENCE [GENOMIC DNA]</scope>
</reference>
<reference key="3">
    <citation type="journal article" date="1993" name="J. Bacteriol.">
        <title>The Escherichia coli mutant requiring D-glutamic acid is the result of mutations in two distinct genetic loci.</title>
        <authorList>
            <person name="Dougherty T.J."/>
            <person name="Thanassi J.A."/>
            <person name="Pucci M.J."/>
        </authorList>
    </citation>
    <scope>NUCLEOTIDE SEQUENCE [GENOMIC DNA]</scope>
    <source>
        <strain>B/rWM335</strain>
    </source>
</reference>
<reference key="4">
    <citation type="journal article" date="1993" name="Nucleic Acids Res.">
        <title>Analysis of the Escherichia coli genome. IV. DNA sequence of the region from 89.2 to 92.8 minutes.</title>
        <authorList>
            <person name="Blattner F.R."/>
            <person name="Burland V.D."/>
            <person name="Plunkett G. III"/>
            <person name="Sofia H.J."/>
            <person name="Daniels D.L."/>
        </authorList>
    </citation>
    <scope>NUCLEOTIDE SEQUENCE [LARGE SCALE GENOMIC DNA]</scope>
    <source>
        <strain>K12 / MG1655 / ATCC 47076</strain>
    </source>
</reference>
<reference key="5">
    <citation type="journal article" date="1997" name="Science">
        <title>The complete genome sequence of Escherichia coli K-12.</title>
        <authorList>
            <person name="Blattner F.R."/>
            <person name="Plunkett G. III"/>
            <person name="Bloch C.A."/>
            <person name="Perna N.T."/>
            <person name="Burland V."/>
            <person name="Riley M."/>
            <person name="Collado-Vides J."/>
            <person name="Glasner J.D."/>
            <person name="Rode C.K."/>
            <person name="Mayhew G.F."/>
            <person name="Gregor J."/>
            <person name="Davis N.W."/>
            <person name="Kirkpatrick H.A."/>
            <person name="Goeden M.A."/>
            <person name="Rose D.J."/>
            <person name="Mau B."/>
            <person name="Shao Y."/>
        </authorList>
    </citation>
    <scope>NUCLEOTIDE SEQUENCE [LARGE SCALE GENOMIC DNA]</scope>
    <source>
        <strain>K12 / MG1655 / ATCC 47076</strain>
    </source>
</reference>
<reference key="6">
    <citation type="journal article" date="2006" name="Mol. Syst. Biol.">
        <title>Highly accurate genome sequences of Escherichia coli K-12 strains MG1655 and W3110.</title>
        <authorList>
            <person name="Hayashi K."/>
            <person name="Morooka N."/>
            <person name="Yamamoto Y."/>
            <person name="Fujita K."/>
            <person name="Isono K."/>
            <person name="Choi S."/>
            <person name="Ohtsubo E."/>
            <person name="Baba T."/>
            <person name="Wanner B.L."/>
            <person name="Mori H."/>
            <person name="Horiuchi T."/>
        </authorList>
    </citation>
    <scope>NUCLEOTIDE SEQUENCE [LARGE SCALE GENOMIC DNA]</scope>
    <source>
        <strain>K12 / W3110 / ATCC 27325 / DSM 5911</strain>
    </source>
</reference>
<reference key="7">
    <citation type="journal article" date="1992" name="J. Bacteriol.">
        <title>Identification of the Escherichia coli murI gene, which is required for the biosynthesis of D-glutamic acid, a specific component of bacterial peptidoglycan.</title>
        <authorList>
            <person name="Doublet P."/>
            <person name="van Heijenoort J."/>
            <person name="Mengin-Lecreulx D."/>
        </authorList>
    </citation>
    <scope>CHARACTERIZATION</scope>
    <scope>PATHWAY</scope>
    <scope>FUNCTION</scope>
    <source>
        <strain>K12</strain>
    </source>
</reference>
<reference key="8">
    <citation type="journal article" date="1993" name="J. Bacteriol.">
        <title>The murI gene of Escherichia coli is an essential gene that encodes a glutamate racemase activity.</title>
        <authorList>
            <person name="Doublet P."/>
            <person name="van Heijenoort J."/>
            <person name="Bohin J.-P."/>
            <person name="Mengin-Lecreulx D."/>
        </authorList>
    </citation>
    <scope>CHARACTERIZATION</scope>
    <scope>PATHWAY</scope>
    <scope>FUNCTION</scope>
    <scope>CATALYTIC ACTIVITY</scope>
</reference>
<reference key="9">
    <citation type="journal article" date="2007" name="Nature">
        <title>Exploitation of structural and regulatory diversity in glutamate racemases.</title>
        <authorList>
            <person name="Lundqvist T."/>
            <person name="Fisher S.L."/>
            <person name="Kern G."/>
            <person name="Folmer R.H."/>
            <person name="Xue Y."/>
            <person name="Newton D.T."/>
            <person name="Keating T.A."/>
            <person name="Alm R.A."/>
            <person name="de Jonge B.L."/>
        </authorList>
    </citation>
    <scope>X-RAY CRYSTALLOGRAPHY (1.90 ANGSTROMS) IN COMPLEX WITH GLUTAMATE AND UDP-N-ACETYL-ALPHA-D-MURAMOYL-L-ALANINE</scope>
    <scope>FUNCTION</scope>
    <scope>PATHWAY</scope>
    <scope>CATALYTIC ACTIVITY</scope>
    <scope>ACTIVITY REGULATION</scope>
    <scope>SUBUNIT</scope>
</reference>
<keyword id="KW-0002">3D-structure</keyword>
<keyword id="KW-0133">Cell shape</keyword>
<keyword id="KW-0961">Cell wall biogenesis/degradation</keyword>
<keyword id="KW-0413">Isomerase</keyword>
<keyword id="KW-0573">Peptidoglycan synthesis</keyword>
<keyword id="KW-1185">Reference proteome</keyword>
<sequence length="285" mass="31002">MATKLQDGNTPCLAATPSEPRPTVLVFDSGVGGLSVYDEIRHLLPDLHYIYAFDNVAFPYGEKSEAFIVERVVAIVTAVQERYPLALAVVACNTASTVSLPALREKFDFPVVGVVPAIKPAARLTANGIVGLLATRGTVKRSYTHELIARFANECQIEMLGSAEMVELAEAKLHGEDVSLDALKRILRPWLRMKEPPDTVVLGCTHFPLLQEELLQVLPEGTRLVDSGAAIARRTAWLLEHEAPDAKSADANIAFCMAMTPGAEQLLPVLQRYGFETLEKLAVLG</sequence>
<gene>
    <name evidence="2 6 7" type="primary">murI</name>
    <name type="synonym">dga</name>
    <name type="synonym">glr</name>
    <name type="synonym">yijA</name>
    <name type="ordered locus">b3967</name>
    <name type="ordered locus">JW5550</name>
</gene>
<evidence type="ECO:0000250" key="1">
    <source>
        <dbReference type="UniProtKB" id="O58403"/>
    </source>
</evidence>
<evidence type="ECO:0000255" key="2">
    <source>
        <dbReference type="HAMAP-Rule" id="MF_00258"/>
    </source>
</evidence>
<evidence type="ECO:0000269" key="3">
    <source>
    </source>
</evidence>
<evidence type="ECO:0000269" key="4">
    <source>
    </source>
</evidence>
<evidence type="ECO:0000269" key="5">
    <source>
    </source>
</evidence>
<evidence type="ECO:0000303" key="6">
    <source>
    </source>
</evidence>
<evidence type="ECO:0000303" key="7">
    <source>
    </source>
</evidence>
<evidence type="ECO:0000305" key="8"/>
<evidence type="ECO:0000305" key="9">
    <source>
    </source>
</evidence>
<evidence type="ECO:0007744" key="10">
    <source>
        <dbReference type="PDB" id="2JFN"/>
    </source>
</evidence>
<evidence type="ECO:0007829" key="11">
    <source>
        <dbReference type="PDB" id="2JFN"/>
    </source>
</evidence>
<comment type="function">
    <text evidence="2 3 5 9">Provides the (R)-glutamate required for cell wall biosynthesis.</text>
</comment>
<comment type="catalytic activity">
    <reaction evidence="2 4 5">
        <text>L-glutamate = D-glutamate</text>
        <dbReference type="Rhea" id="RHEA:12813"/>
        <dbReference type="ChEBI" id="CHEBI:29985"/>
        <dbReference type="ChEBI" id="CHEBI:29986"/>
        <dbReference type="EC" id="5.1.1.3"/>
    </reaction>
</comment>
<comment type="activity regulation">
    <text evidence="4">The low basal catalytic activity in increased 1000-fold in the presence of UDP-MurNAc-L-Ala, the product of the preceding enzyme in the peptidoglycan biosynthesis.</text>
</comment>
<comment type="pathway">
    <text evidence="2 3 5 9">Cell wall biogenesis; peptidoglycan biosynthesis.</text>
</comment>
<comment type="subunit">
    <text evidence="4">Monomer.</text>
</comment>
<comment type="interaction">
    <interactant intactId="EBI-554903">
        <id>P22634</id>
    </interactant>
    <interactant intactId="EBI-301077">
        <id>P0CE47</id>
        <label>tufA</label>
    </interactant>
    <organismsDiffer>false</organismsDiffer>
    <experiments>2</experiments>
</comment>
<comment type="similarity">
    <text evidence="2">Belongs to the aspartate/glutamate racemases family.</text>
</comment>
<comment type="sequence caution" evidence="8">
    <conflict type="erroneous initiation">
        <sequence resource="EMBL-CDS" id="AAA23677"/>
    </conflict>
    <text>Extended N-terminus.</text>
</comment>
<comment type="sequence caution" evidence="8">
    <conflict type="erroneous initiation">
        <sequence resource="EMBL-CDS" id="AAC43073"/>
    </conflict>
    <text>Extended N-terminus.</text>
</comment>
<comment type="sequence caution" evidence="8">
    <conflict type="erroneous initiation">
        <sequence resource="EMBL-CDS" id="CAA23637"/>
    </conflict>
    <text>Extended N-terminus.</text>
</comment>
<comment type="sequence caution" evidence="8">
    <conflict type="erroneous initiation">
        <sequence resource="EMBL-CDS" id="CAA23638"/>
    </conflict>
    <text>Extended N-terminus.</text>
</comment>
<organism>
    <name type="scientific">Escherichia coli (strain K12)</name>
    <dbReference type="NCBI Taxonomy" id="83333"/>
    <lineage>
        <taxon>Bacteria</taxon>
        <taxon>Pseudomonadati</taxon>
        <taxon>Pseudomonadota</taxon>
        <taxon>Gammaproteobacteria</taxon>
        <taxon>Enterobacterales</taxon>
        <taxon>Enterobacteriaceae</taxon>
        <taxon>Escherichia</taxon>
    </lineage>
</organism>
<name>MURI_ECOLI</name>